<proteinExistence type="predicted"/>
<evidence type="ECO:0000255" key="1"/>
<evidence type="ECO:0000269" key="2">
    <source>
    </source>
</evidence>
<evidence type="ECO:0000269" key="3">
    <source>
    </source>
</evidence>
<evidence type="ECO:0000269" key="4">
    <source>
    </source>
</evidence>
<evidence type="ECO:0000269" key="5">
    <source>
    </source>
</evidence>
<evidence type="ECO:0000269" key="6">
    <source>
    </source>
</evidence>
<evidence type="ECO:0000303" key="7">
    <source>
    </source>
</evidence>
<dbReference type="EMBL" id="CU329671">
    <property type="protein sequence ID" value="CAA18408.1"/>
    <property type="molecule type" value="Genomic_DNA"/>
</dbReference>
<dbReference type="PIR" id="T39775">
    <property type="entry name" value="T39775"/>
</dbReference>
<dbReference type="RefSeq" id="NP_595735.1">
    <property type="nucleotide sequence ID" value="NM_001021633.2"/>
</dbReference>
<dbReference type="SMR" id="O60142"/>
<dbReference type="BioGRID" id="277316">
    <property type="interactions" value="86"/>
</dbReference>
<dbReference type="STRING" id="284812.O60142"/>
<dbReference type="iPTMnet" id="O60142"/>
<dbReference type="PaxDb" id="4896-SPBC18H10.11c.1"/>
<dbReference type="EnsemblFungi" id="SPBC18H10.11c.1">
    <property type="protein sequence ID" value="SPBC18H10.11c.1:pep"/>
    <property type="gene ID" value="SPBC18H10.11c"/>
</dbReference>
<dbReference type="GeneID" id="2540797"/>
<dbReference type="KEGG" id="spo:2540797"/>
<dbReference type="PomBase" id="SPBC18H10.11c">
    <property type="gene designation" value="ppr2"/>
</dbReference>
<dbReference type="VEuPathDB" id="FungiDB:SPBC18H10.11c"/>
<dbReference type="eggNOG" id="ENOG502QSY4">
    <property type="taxonomic scope" value="Eukaryota"/>
</dbReference>
<dbReference type="HOGENOM" id="CLU_625787_0_0_1"/>
<dbReference type="InParanoid" id="O60142"/>
<dbReference type="OMA" id="ASADFYW"/>
<dbReference type="PhylomeDB" id="O60142"/>
<dbReference type="PRO" id="PR:O60142"/>
<dbReference type="Proteomes" id="UP000002485">
    <property type="component" value="Chromosome II"/>
</dbReference>
<dbReference type="GO" id="GO:0005759">
    <property type="term" value="C:mitochondrial matrix"/>
    <property type="evidence" value="ECO:0000305"/>
    <property type="project" value="PomBase"/>
</dbReference>
<dbReference type="GO" id="GO:0005739">
    <property type="term" value="C:mitochondrion"/>
    <property type="evidence" value="ECO:0000314"/>
    <property type="project" value="PomBase"/>
</dbReference>
<dbReference type="GO" id="GO:0140053">
    <property type="term" value="P:mitochondrial gene expression"/>
    <property type="evidence" value="ECO:0000315"/>
    <property type="project" value="PomBase"/>
</dbReference>
<dbReference type="GO" id="GO:0006417">
    <property type="term" value="P:regulation of translation"/>
    <property type="evidence" value="ECO:0007669"/>
    <property type="project" value="UniProtKB-KW"/>
</dbReference>
<dbReference type="GO" id="GO:0006412">
    <property type="term" value="P:translation"/>
    <property type="evidence" value="ECO:0007669"/>
    <property type="project" value="UniProtKB-KW"/>
</dbReference>
<dbReference type="Gene3D" id="1.25.40.10">
    <property type="entry name" value="Tetratricopeptide repeat domain"/>
    <property type="match status" value="1"/>
</dbReference>
<dbReference type="InterPro" id="IPR002885">
    <property type="entry name" value="Pentatricopeptide_rpt"/>
</dbReference>
<dbReference type="InterPro" id="IPR011990">
    <property type="entry name" value="TPR-like_helical_dom_sf"/>
</dbReference>
<dbReference type="NCBIfam" id="TIGR00756">
    <property type="entry name" value="PPR"/>
    <property type="match status" value="1"/>
</dbReference>
<dbReference type="PANTHER" id="PTHR47941">
    <property type="entry name" value="PENTATRICOPEPTIDE REPEAT-CONTAINING PROTEIN 3, MITOCHONDRIAL"/>
    <property type="match status" value="1"/>
</dbReference>
<dbReference type="Pfam" id="PF13041">
    <property type="entry name" value="PPR_2"/>
    <property type="match status" value="1"/>
</dbReference>
<dbReference type="PROSITE" id="PS51375">
    <property type="entry name" value="PPR"/>
    <property type="match status" value="2"/>
</dbReference>
<reference key="1">
    <citation type="journal article" date="2002" name="Nature">
        <title>The genome sequence of Schizosaccharomyces pombe.</title>
        <authorList>
            <person name="Wood V."/>
            <person name="Gwilliam R."/>
            <person name="Rajandream M.A."/>
            <person name="Lyne M.H."/>
            <person name="Lyne R."/>
            <person name="Stewart A."/>
            <person name="Sgouros J.G."/>
            <person name="Peat N."/>
            <person name="Hayles J."/>
            <person name="Baker S.G."/>
            <person name="Basham D."/>
            <person name="Bowman S."/>
            <person name="Brooks K."/>
            <person name="Brown D."/>
            <person name="Brown S."/>
            <person name="Chillingworth T."/>
            <person name="Churcher C.M."/>
            <person name="Collins M."/>
            <person name="Connor R."/>
            <person name="Cronin A."/>
            <person name="Davis P."/>
            <person name="Feltwell T."/>
            <person name="Fraser A."/>
            <person name="Gentles S."/>
            <person name="Goble A."/>
            <person name="Hamlin N."/>
            <person name="Harris D.E."/>
            <person name="Hidalgo J."/>
            <person name="Hodgson G."/>
            <person name="Holroyd S."/>
            <person name="Hornsby T."/>
            <person name="Howarth S."/>
            <person name="Huckle E.J."/>
            <person name="Hunt S."/>
            <person name="Jagels K."/>
            <person name="James K.D."/>
            <person name="Jones L."/>
            <person name="Jones M."/>
            <person name="Leather S."/>
            <person name="McDonald S."/>
            <person name="McLean J."/>
            <person name="Mooney P."/>
            <person name="Moule S."/>
            <person name="Mungall K.L."/>
            <person name="Murphy L.D."/>
            <person name="Niblett D."/>
            <person name="Odell C."/>
            <person name="Oliver K."/>
            <person name="O'Neil S."/>
            <person name="Pearson D."/>
            <person name="Quail M.A."/>
            <person name="Rabbinowitsch E."/>
            <person name="Rutherford K.M."/>
            <person name="Rutter S."/>
            <person name="Saunders D."/>
            <person name="Seeger K."/>
            <person name="Sharp S."/>
            <person name="Skelton J."/>
            <person name="Simmonds M.N."/>
            <person name="Squares R."/>
            <person name="Squares S."/>
            <person name="Stevens K."/>
            <person name="Taylor K."/>
            <person name="Taylor R.G."/>
            <person name="Tivey A."/>
            <person name="Walsh S.V."/>
            <person name="Warren T."/>
            <person name="Whitehead S."/>
            <person name="Woodward J.R."/>
            <person name="Volckaert G."/>
            <person name="Aert R."/>
            <person name="Robben J."/>
            <person name="Grymonprez B."/>
            <person name="Weltjens I."/>
            <person name="Vanstreels E."/>
            <person name="Rieger M."/>
            <person name="Schaefer M."/>
            <person name="Mueller-Auer S."/>
            <person name="Gabel C."/>
            <person name="Fuchs M."/>
            <person name="Duesterhoeft A."/>
            <person name="Fritzc C."/>
            <person name="Holzer E."/>
            <person name="Moestl D."/>
            <person name="Hilbert H."/>
            <person name="Borzym K."/>
            <person name="Langer I."/>
            <person name="Beck A."/>
            <person name="Lehrach H."/>
            <person name="Reinhardt R."/>
            <person name="Pohl T.M."/>
            <person name="Eger P."/>
            <person name="Zimmermann W."/>
            <person name="Wedler H."/>
            <person name="Wambutt R."/>
            <person name="Purnelle B."/>
            <person name="Goffeau A."/>
            <person name="Cadieu E."/>
            <person name="Dreano S."/>
            <person name="Gloux S."/>
            <person name="Lelaure V."/>
            <person name="Mottier S."/>
            <person name="Galibert F."/>
            <person name="Aves S.J."/>
            <person name="Xiang Z."/>
            <person name="Hunt C."/>
            <person name="Moore K."/>
            <person name="Hurst S.M."/>
            <person name="Lucas M."/>
            <person name="Rochet M."/>
            <person name="Gaillardin C."/>
            <person name="Tallada V.A."/>
            <person name="Garzon A."/>
            <person name="Thode G."/>
            <person name="Daga R.R."/>
            <person name="Cruzado L."/>
            <person name="Jimenez J."/>
            <person name="Sanchez M."/>
            <person name="del Rey F."/>
            <person name="Benito J."/>
            <person name="Dominguez A."/>
            <person name="Revuelta J.L."/>
            <person name="Moreno S."/>
            <person name="Armstrong J."/>
            <person name="Forsburg S.L."/>
            <person name="Cerutti L."/>
            <person name="Lowe T."/>
            <person name="McCombie W.R."/>
            <person name="Paulsen I."/>
            <person name="Potashkin J."/>
            <person name="Shpakovski G.V."/>
            <person name="Ussery D."/>
            <person name="Barrell B.G."/>
            <person name="Nurse P."/>
        </authorList>
    </citation>
    <scope>NUCLEOTIDE SEQUENCE [LARGE SCALE GENOMIC DNA]</scope>
    <source>
        <strain>972 / ATCC 24843</strain>
    </source>
</reference>
<reference key="2">
    <citation type="journal article" date="2006" name="Nat. Biotechnol.">
        <title>ORFeome cloning and global analysis of protein localization in the fission yeast Schizosaccharomyces pombe.</title>
        <authorList>
            <person name="Matsuyama A."/>
            <person name="Arai R."/>
            <person name="Yashiroda Y."/>
            <person name="Shirai A."/>
            <person name="Kamata A."/>
            <person name="Sekido S."/>
            <person name="Kobayashi Y."/>
            <person name="Hashimoto A."/>
            <person name="Hamamoto M."/>
            <person name="Hiraoka Y."/>
            <person name="Horinouchi S."/>
            <person name="Yoshida M."/>
        </authorList>
    </citation>
    <scope>SUBCELLULAR LOCATION [LARGE SCALE ANALYSIS]</scope>
</reference>
<reference key="3">
    <citation type="journal article" date="2011" name="Nucleic Acids Res.">
        <title>A genome wide study in fission yeast reveals nine PPR proteins that regulate mitochondrial gene expression.</title>
        <authorList>
            <person name="Kuhl I."/>
            <person name="Dujeancourt L."/>
            <person name="Gaisne M."/>
            <person name="Herbert C.J."/>
            <person name="Bonnefoy N."/>
        </authorList>
    </citation>
    <scope>DOMAIN</scope>
    <scope>SUBCELLULAR LOCATION</scope>
    <scope>DISRUPTION PHENOTYPE</scope>
    <scope>FUNCTION</scope>
</reference>
<reference key="4">
    <citation type="journal article" date="2017" name="Nucleic Acids Res.">
        <title>The Schizosaccharomyces pombe PPR protein Ppr10 associates with a novel protein Mpa1 and acts as a mitochondrial translational activator.</title>
        <authorList>
            <person name="Wang Y."/>
            <person name="Yan J."/>
            <person name="Zhang Q."/>
            <person name="Ma X."/>
            <person name="Zhang J."/>
            <person name="Su M."/>
            <person name="Wang X."/>
            <person name="Huang Y."/>
        </authorList>
    </citation>
    <scope>FUNCTION</scope>
    <scope>DISRUPTION PHENOTYPE</scope>
</reference>
<reference key="5">
    <citation type="journal article" date="2022" name="Arch. Microbiol.">
        <title>Loss of PPR protein Ppr2 induces ferroptosis-like cell death in Schizosaccharomyces pombe.</title>
        <authorList>
            <person name="Liu Z."/>
            <person name="Ebrahim A."/>
            <person name="Wu X."/>
            <person name="Li M."/>
            <person name="Huang Y."/>
        </authorList>
    </citation>
    <scope>FUNCTION</scope>
    <scope>DISRUPTION PHENOTYPE</scope>
</reference>
<reference key="6">
    <citation type="journal article" date="2024" name="Mitochondrion">
        <title>The deletion of ppr2 interferes iron sensing and leads to oxidative stress response in Schizosaccharomyces pombe.</title>
        <authorList>
            <person name="Liu Z."/>
            <person name="Jin T."/>
            <person name="Qin B."/>
            <person name="Li R."/>
            <person name="Shang J."/>
            <person name="Huang Y."/>
        </authorList>
    </citation>
    <scope>FUNCTION</scope>
    <scope>DISRUPTION PHENOTYPE</scope>
</reference>
<feature type="transit peptide" description="Mitochondrion" evidence="1">
    <location>
        <begin position="1"/>
        <end position="33"/>
    </location>
</feature>
<feature type="chain" id="PRO_0000316604" description="Pentatricopeptide repeat-containing protein 2, mitochondrial">
    <location>
        <begin position="34"/>
        <end position="432"/>
    </location>
</feature>
<feature type="repeat" description="PPR 1">
    <location>
        <begin position="108"/>
        <end position="142"/>
    </location>
</feature>
<feature type="repeat" description="PPR 2">
    <location>
        <begin position="143"/>
        <end position="179"/>
    </location>
</feature>
<feature type="repeat" description="PPR 3">
    <location>
        <begin position="360"/>
        <end position="394"/>
    </location>
</feature>
<feature type="repeat" description="PPR 4">
    <location>
        <begin position="395"/>
        <end position="429"/>
    </location>
</feature>
<accession>O60142</accession>
<organism>
    <name type="scientific">Schizosaccharomyces pombe (strain 972 / ATCC 24843)</name>
    <name type="common">Fission yeast</name>
    <dbReference type="NCBI Taxonomy" id="284812"/>
    <lineage>
        <taxon>Eukaryota</taxon>
        <taxon>Fungi</taxon>
        <taxon>Dikarya</taxon>
        <taxon>Ascomycota</taxon>
        <taxon>Taphrinomycotina</taxon>
        <taxon>Schizosaccharomycetes</taxon>
        <taxon>Schizosaccharomycetales</taxon>
        <taxon>Schizosaccharomycetaceae</taxon>
        <taxon>Schizosaccharomyces</taxon>
    </lineage>
</organism>
<keyword id="KW-0010">Activator</keyword>
<keyword id="KW-0496">Mitochondrion</keyword>
<keyword id="KW-0648">Protein biosynthesis</keyword>
<keyword id="KW-1185">Reference proteome</keyword>
<keyword id="KW-0677">Repeat</keyword>
<keyword id="KW-0809">Transit peptide</keyword>
<keyword id="KW-0810">Translation regulation</keyword>
<sequence length="432" mass="50048">MQFIKRTFPRRAFVDLLLNRFCLREFATTYSVSVSNARKLVRKRLLIADALKFKEQVNNLNEFRNKKTKSSLIRNDGFKLAKNVSSLLQKESLEKALHLLYERSNAKKTVAYNLVLQYHLAKGHYNAAWSLYNDMKKRQQKPSDHTYSILLKGFCDAIEKNKQGNFSKLREYSEKVTASALKESNNVTSNLHHIRIISKCSLKLKSMVLVSMIIPSIKQTLDFYSGSQILRLLNDFSMFNPEQREEVLKMGTNLWNYFVLECQKKGIAVDESLICSFVKLLATSNSPQVRNVGLNILTKVMGLEYQIFEDSNLRYPLPPYCDCTSRSLVTALQVIRQIQNGDLLARYWKYFEESHKFDLNLQVYHEKLRNLVQQGQAAECLNTIKRMSHNGPFPTQQTFLIVLSLCKRPKFYSYTKSFLDLAKKLNVPVEAT</sequence>
<name>PPR2_SCHPO</name>
<protein>
    <recommendedName>
        <fullName evidence="7">Pentatricopeptide repeat-containing protein 2, mitochondrial</fullName>
    </recommendedName>
</protein>
<gene>
    <name evidence="7" type="primary">ppr2</name>
    <name type="ORF">SPBC18H10.11c</name>
</gene>
<comment type="function">
    <text evidence="3 4 5 6">Mitochondrial RNA-binding protein that acts as a general translation factor (PubMed:21727087, PubMed:28334955). Plays a critical role in the synthesis of all mitochondrial DNA-encoded oxidative phosphorylation subunits, which are essential for mitochondrial respiration (PubMed:21727087, PubMed:28334955, PubMed:38499131). Essential for the expression of iron-sulfur cluster (ISC) proteins as well as other heme proteins related to iron-sensing, and thus plays a key role in iron homeostasis (PubMed:35657410, PubMed:38499131).</text>
</comment>
<comment type="subcellular location">
    <subcellularLocation>
        <location evidence="2 3">Mitochondrion</location>
    </subcellularLocation>
</comment>
<comment type="disruption phenotype">
    <text evidence="3 4 5 6">Results in increased expression of iron uptake genes and caused ferroptosis-like cell death (PubMed:35657410). Modestly affects gfrowth on the presence of antimycin A (PubMed:28334955). Reduces viability on glycerol- and galactose-containing media (PubMed:21727087, PubMed:38499131). Causes mitochondrial dysfunction, which is likely to lead to iron-sensing defect and iron starvation response, resulting in perturbation of iron homeostasis and increased hydroxyl radical production (PubMed:38499131).</text>
</comment>